<dbReference type="EMBL" id="AJ938182">
    <property type="protein sequence ID" value="CAI81800.1"/>
    <property type="molecule type" value="Genomic_DNA"/>
</dbReference>
<dbReference type="RefSeq" id="WP_000547687.1">
    <property type="nucleotide sequence ID" value="NC_007622.1"/>
</dbReference>
<dbReference type="PDB" id="6FXC">
    <property type="method" value="EM"/>
    <property type="resolution" value="6.76 A"/>
    <property type="chains" value="AS/BS=2-104"/>
</dbReference>
<dbReference type="PDBsum" id="6FXC"/>
<dbReference type="EMDB" id="EMD-0243"/>
<dbReference type="EMDB" id="EMD-3637"/>
<dbReference type="SMR" id="Q2YYK8"/>
<dbReference type="KEGG" id="sab:SAB2111c"/>
<dbReference type="HOGENOM" id="CLU_093315_2_0_9"/>
<dbReference type="GO" id="GO:1990904">
    <property type="term" value="C:ribonucleoprotein complex"/>
    <property type="evidence" value="ECO:0007669"/>
    <property type="project" value="UniProtKB-KW"/>
</dbReference>
<dbReference type="GO" id="GO:0005840">
    <property type="term" value="C:ribosome"/>
    <property type="evidence" value="ECO:0007669"/>
    <property type="project" value="UniProtKB-KW"/>
</dbReference>
<dbReference type="GO" id="GO:0019843">
    <property type="term" value="F:rRNA binding"/>
    <property type="evidence" value="ECO:0007669"/>
    <property type="project" value="UniProtKB-UniRule"/>
</dbReference>
<dbReference type="GO" id="GO:0003735">
    <property type="term" value="F:structural constituent of ribosome"/>
    <property type="evidence" value="ECO:0007669"/>
    <property type="project" value="InterPro"/>
</dbReference>
<dbReference type="GO" id="GO:0006412">
    <property type="term" value="P:translation"/>
    <property type="evidence" value="ECO:0007669"/>
    <property type="project" value="UniProtKB-UniRule"/>
</dbReference>
<dbReference type="CDD" id="cd06089">
    <property type="entry name" value="KOW_RPL26"/>
    <property type="match status" value="1"/>
</dbReference>
<dbReference type="FunFam" id="2.30.30.30:FF:000004">
    <property type="entry name" value="50S ribosomal protein L24"/>
    <property type="match status" value="1"/>
</dbReference>
<dbReference type="Gene3D" id="2.30.30.30">
    <property type="match status" value="1"/>
</dbReference>
<dbReference type="HAMAP" id="MF_01326_B">
    <property type="entry name" value="Ribosomal_uL24_B"/>
    <property type="match status" value="1"/>
</dbReference>
<dbReference type="InterPro" id="IPR005824">
    <property type="entry name" value="KOW"/>
</dbReference>
<dbReference type="InterPro" id="IPR014722">
    <property type="entry name" value="Rib_uL2_dom2"/>
</dbReference>
<dbReference type="InterPro" id="IPR003256">
    <property type="entry name" value="Ribosomal_uL24"/>
</dbReference>
<dbReference type="InterPro" id="IPR005825">
    <property type="entry name" value="Ribosomal_uL24_CS"/>
</dbReference>
<dbReference type="InterPro" id="IPR041988">
    <property type="entry name" value="Ribosomal_uL24_KOW"/>
</dbReference>
<dbReference type="InterPro" id="IPR008991">
    <property type="entry name" value="Translation_prot_SH3-like_sf"/>
</dbReference>
<dbReference type="NCBIfam" id="TIGR01079">
    <property type="entry name" value="rplX_bact"/>
    <property type="match status" value="1"/>
</dbReference>
<dbReference type="PANTHER" id="PTHR12903">
    <property type="entry name" value="MITOCHONDRIAL RIBOSOMAL PROTEIN L24"/>
    <property type="match status" value="1"/>
</dbReference>
<dbReference type="Pfam" id="PF00467">
    <property type="entry name" value="KOW"/>
    <property type="match status" value="1"/>
</dbReference>
<dbReference type="Pfam" id="PF17136">
    <property type="entry name" value="ribosomal_L24"/>
    <property type="match status" value="1"/>
</dbReference>
<dbReference type="SMART" id="SM00739">
    <property type="entry name" value="KOW"/>
    <property type="match status" value="1"/>
</dbReference>
<dbReference type="SUPFAM" id="SSF50104">
    <property type="entry name" value="Translation proteins SH3-like domain"/>
    <property type="match status" value="1"/>
</dbReference>
<dbReference type="PROSITE" id="PS01108">
    <property type="entry name" value="RIBOSOMAL_L24"/>
    <property type="match status" value="1"/>
</dbReference>
<accession>Q2YYK8</accession>
<name>RL24_STAAB</name>
<evidence type="ECO:0000255" key="1">
    <source>
        <dbReference type="HAMAP-Rule" id="MF_01326"/>
    </source>
</evidence>
<evidence type="ECO:0000305" key="2"/>
<organism>
    <name type="scientific">Staphylococcus aureus (strain bovine RF122 / ET3-1)</name>
    <dbReference type="NCBI Taxonomy" id="273036"/>
    <lineage>
        <taxon>Bacteria</taxon>
        <taxon>Bacillati</taxon>
        <taxon>Bacillota</taxon>
        <taxon>Bacilli</taxon>
        <taxon>Bacillales</taxon>
        <taxon>Staphylococcaceae</taxon>
        <taxon>Staphylococcus</taxon>
    </lineage>
</organism>
<protein>
    <recommendedName>
        <fullName evidence="1">Large ribosomal subunit protein uL24</fullName>
    </recommendedName>
    <alternativeName>
        <fullName evidence="2">50S ribosomal protein L24</fullName>
    </alternativeName>
</protein>
<comment type="function">
    <text evidence="1">One of two assembly initiator proteins, it binds directly to the 5'-end of the 23S rRNA, where it nucleates assembly of the 50S subunit.</text>
</comment>
<comment type="function">
    <text evidence="1">One of the proteins that surrounds the polypeptide exit tunnel on the outside of the subunit.</text>
</comment>
<comment type="subunit">
    <text evidence="1">Part of the 50S ribosomal subunit.</text>
</comment>
<comment type="similarity">
    <text evidence="1">Belongs to the universal ribosomal protein uL24 family.</text>
</comment>
<gene>
    <name evidence="1" type="primary">rplX</name>
    <name type="ordered locus">SAB2111c</name>
</gene>
<sequence>MHIKKGDNVKVIAGKDKGKEGKVIATLPKKDRVVVEGVNIMKKHQKPTQLNPEGGILETEAAIHVSNVQLLDPKTNEPTRVGYKFVDGKKVRIAKKSGEEIKSNN</sequence>
<reference key="1">
    <citation type="journal article" date="2007" name="PLoS ONE">
        <title>Molecular correlates of host specialization in Staphylococcus aureus.</title>
        <authorList>
            <person name="Herron-Olson L."/>
            <person name="Fitzgerald J.R."/>
            <person name="Musser J.M."/>
            <person name="Kapur V."/>
        </authorList>
    </citation>
    <scope>NUCLEOTIDE SEQUENCE [LARGE SCALE GENOMIC DNA]</scope>
    <source>
        <strain>bovine RF122 / ET3-1</strain>
    </source>
</reference>
<proteinExistence type="evidence at protein level"/>
<keyword id="KW-0002">3D-structure</keyword>
<keyword id="KW-0687">Ribonucleoprotein</keyword>
<keyword id="KW-0689">Ribosomal protein</keyword>
<keyword id="KW-0694">RNA-binding</keyword>
<keyword id="KW-0699">rRNA-binding</keyword>
<feature type="chain" id="PRO_0000241665" description="Large ribosomal subunit protein uL24">
    <location>
        <begin position="1"/>
        <end position="105"/>
    </location>
</feature>